<proteinExistence type="inferred from homology"/>
<feature type="chain" id="PRO_0000367771" description="Glutamate--tRNA ligase 1">
    <location>
        <begin position="1"/>
        <end position="443"/>
    </location>
</feature>
<feature type="short sequence motif" description="'HIGH' region" evidence="1">
    <location>
        <begin position="8"/>
        <end position="18"/>
    </location>
</feature>
<feature type="short sequence motif" description="'KMSKS' region" evidence="1">
    <location>
        <begin position="239"/>
        <end position="243"/>
    </location>
</feature>
<feature type="binding site" evidence="1">
    <location>
        <position position="242"/>
    </location>
    <ligand>
        <name>ATP</name>
        <dbReference type="ChEBI" id="CHEBI:30616"/>
    </ligand>
</feature>
<organism>
    <name type="scientific">Rhizorhabdus wittichii (strain DSM 6014 / CCUG 31198 / JCM 15750 / NBRC 105917 / EY 4224 / RW1)</name>
    <name type="common">Sphingomonas wittichii</name>
    <dbReference type="NCBI Taxonomy" id="392499"/>
    <lineage>
        <taxon>Bacteria</taxon>
        <taxon>Pseudomonadati</taxon>
        <taxon>Pseudomonadota</taxon>
        <taxon>Alphaproteobacteria</taxon>
        <taxon>Sphingomonadales</taxon>
        <taxon>Sphingomonadaceae</taxon>
        <taxon>Rhizorhabdus</taxon>
    </lineage>
</organism>
<name>SYE1_RHIWR</name>
<gene>
    <name evidence="1" type="primary">gltX1</name>
    <name type="ordered locus">Swit_2439</name>
</gene>
<keyword id="KW-0030">Aminoacyl-tRNA synthetase</keyword>
<keyword id="KW-0067">ATP-binding</keyword>
<keyword id="KW-0963">Cytoplasm</keyword>
<keyword id="KW-0436">Ligase</keyword>
<keyword id="KW-0547">Nucleotide-binding</keyword>
<keyword id="KW-0648">Protein biosynthesis</keyword>
<keyword id="KW-1185">Reference proteome</keyword>
<protein>
    <recommendedName>
        <fullName evidence="1">Glutamate--tRNA ligase 1</fullName>
        <ecNumber evidence="1">6.1.1.17</ecNumber>
    </recommendedName>
    <alternativeName>
        <fullName evidence="1">Glutamyl-tRNA synthetase 1</fullName>
        <shortName evidence="1">GluRS 1</shortName>
    </alternativeName>
</protein>
<dbReference type="EC" id="6.1.1.17" evidence="1"/>
<dbReference type="EMBL" id="CP000699">
    <property type="protein sequence ID" value="ABQ68798.1"/>
    <property type="molecule type" value="Genomic_DNA"/>
</dbReference>
<dbReference type="SMR" id="A5V932"/>
<dbReference type="STRING" id="392499.Swit_2439"/>
<dbReference type="PaxDb" id="392499-Swit_2439"/>
<dbReference type="KEGG" id="swi:Swit_2439"/>
<dbReference type="eggNOG" id="COG0008">
    <property type="taxonomic scope" value="Bacteria"/>
</dbReference>
<dbReference type="HOGENOM" id="CLU_015768_6_1_5"/>
<dbReference type="OrthoDB" id="9807503at2"/>
<dbReference type="Proteomes" id="UP000001989">
    <property type="component" value="Chromosome"/>
</dbReference>
<dbReference type="GO" id="GO:0005737">
    <property type="term" value="C:cytoplasm"/>
    <property type="evidence" value="ECO:0007669"/>
    <property type="project" value="UniProtKB-SubCell"/>
</dbReference>
<dbReference type="GO" id="GO:0005524">
    <property type="term" value="F:ATP binding"/>
    <property type="evidence" value="ECO:0007669"/>
    <property type="project" value="UniProtKB-UniRule"/>
</dbReference>
<dbReference type="GO" id="GO:0004818">
    <property type="term" value="F:glutamate-tRNA ligase activity"/>
    <property type="evidence" value="ECO:0007669"/>
    <property type="project" value="UniProtKB-UniRule"/>
</dbReference>
<dbReference type="GO" id="GO:0000049">
    <property type="term" value="F:tRNA binding"/>
    <property type="evidence" value="ECO:0007669"/>
    <property type="project" value="InterPro"/>
</dbReference>
<dbReference type="GO" id="GO:0006424">
    <property type="term" value="P:glutamyl-tRNA aminoacylation"/>
    <property type="evidence" value="ECO:0007669"/>
    <property type="project" value="UniProtKB-UniRule"/>
</dbReference>
<dbReference type="Gene3D" id="1.10.10.350">
    <property type="match status" value="1"/>
</dbReference>
<dbReference type="Gene3D" id="3.40.50.620">
    <property type="entry name" value="HUPs"/>
    <property type="match status" value="1"/>
</dbReference>
<dbReference type="HAMAP" id="MF_00022">
    <property type="entry name" value="Glu_tRNA_synth_type1"/>
    <property type="match status" value="1"/>
</dbReference>
<dbReference type="InterPro" id="IPR045462">
    <property type="entry name" value="aa-tRNA-synth_I_cd-bd"/>
</dbReference>
<dbReference type="InterPro" id="IPR020751">
    <property type="entry name" value="aa-tRNA-synth_I_codon-bd_sub2"/>
</dbReference>
<dbReference type="InterPro" id="IPR001412">
    <property type="entry name" value="aa-tRNA-synth_I_CS"/>
</dbReference>
<dbReference type="InterPro" id="IPR008925">
    <property type="entry name" value="aa_tRNA-synth_I_cd-bd_sf"/>
</dbReference>
<dbReference type="InterPro" id="IPR004527">
    <property type="entry name" value="Glu-tRNA-ligase_bac/mito"/>
</dbReference>
<dbReference type="InterPro" id="IPR000924">
    <property type="entry name" value="Glu/Gln-tRNA-synth"/>
</dbReference>
<dbReference type="InterPro" id="IPR020058">
    <property type="entry name" value="Glu/Gln-tRNA-synth_Ib_cat-dom"/>
</dbReference>
<dbReference type="InterPro" id="IPR049940">
    <property type="entry name" value="GluQ/Sye"/>
</dbReference>
<dbReference type="InterPro" id="IPR014729">
    <property type="entry name" value="Rossmann-like_a/b/a_fold"/>
</dbReference>
<dbReference type="NCBIfam" id="TIGR00464">
    <property type="entry name" value="gltX_bact"/>
    <property type="match status" value="1"/>
</dbReference>
<dbReference type="PANTHER" id="PTHR43311">
    <property type="entry name" value="GLUTAMATE--TRNA LIGASE"/>
    <property type="match status" value="1"/>
</dbReference>
<dbReference type="PANTHER" id="PTHR43311:SF2">
    <property type="entry name" value="GLUTAMATE--TRNA LIGASE, MITOCHONDRIAL-RELATED"/>
    <property type="match status" value="1"/>
</dbReference>
<dbReference type="Pfam" id="PF19269">
    <property type="entry name" value="Anticodon_2"/>
    <property type="match status" value="1"/>
</dbReference>
<dbReference type="Pfam" id="PF00749">
    <property type="entry name" value="tRNA-synt_1c"/>
    <property type="match status" value="1"/>
</dbReference>
<dbReference type="PRINTS" id="PR00987">
    <property type="entry name" value="TRNASYNTHGLU"/>
</dbReference>
<dbReference type="SUPFAM" id="SSF48163">
    <property type="entry name" value="An anticodon-binding domain of class I aminoacyl-tRNA synthetases"/>
    <property type="match status" value="1"/>
</dbReference>
<dbReference type="SUPFAM" id="SSF52374">
    <property type="entry name" value="Nucleotidylyl transferase"/>
    <property type="match status" value="1"/>
</dbReference>
<dbReference type="PROSITE" id="PS00178">
    <property type="entry name" value="AA_TRNA_LIGASE_I"/>
    <property type="match status" value="1"/>
</dbReference>
<accession>A5V932</accession>
<sequence>MVVTRFAPSPTGRLHVGNIRTALHNWMWARAHGGRFLLRLDDTDLERSTEENAASIRADLGWLGLHPDAEAKQSDRFALYESRFEELRAQGRVYPCYESAEELELKRKILAGRGLPPIYDRAALALSDAERTAYEAEGRRPHWRFLLDHESPIAWTDLIRGPQHLDPRLLSDPVVRRADGSWLYMLPSVIDDIAMGVTHVVRGEDHVTNTGLQLQMFAALGAPEPAFAHEALLVGSEGKLSKRLGSLGCDAFRDEGIEPVALIALLARIGTSLPVEPVADPAALFDGFDFARFGRAPARFDLDELKALNARIIHMLPYAAVAGRLPAGMDAAGWEAIRPNLTRVDEAAGWWAVVEGAVSAAIAPEDRAYLAQAADAAAAIDWNEGAWKALTAALGAATGRKGKALFLPLRLALTGREHGPDMNALLPLIGKARAVERLRAAAS</sequence>
<reference key="1">
    <citation type="journal article" date="2010" name="J. Bacteriol.">
        <title>Genome sequence of the dioxin-mineralizing bacterium Sphingomonas wittichii RW1.</title>
        <authorList>
            <person name="Miller T.R."/>
            <person name="Delcher A.L."/>
            <person name="Salzberg S.L."/>
            <person name="Saunders E."/>
            <person name="Detter J.C."/>
            <person name="Halden R.U."/>
        </authorList>
    </citation>
    <scope>NUCLEOTIDE SEQUENCE [LARGE SCALE GENOMIC DNA]</scope>
    <source>
        <strain>DSM 6014 / CCUG 31198 / JCM 15750 / NBRC 105917 / EY 4224 / RW1</strain>
    </source>
</reference>
<evidence type="ECO:0000255" key="1">
    <source>
        <dbReference type="HAMAP-Rule" id="MF_00022"/>
    </source>
</evidence>
<comment type="function">
    <text evidence="1">Catalyzes the attachment of glutamate to tRNA(Glu) in a two-step reaction: glutamate is first activated by ATP to form Glu-AMP and then transferred to the acceptor end of tRNA(Glu).</text>
</comment>
<comment type="catalytic activity">
    <reaction evidence="1">
        <text>tRNA(Glu) + L-glutamate + ATP = L-glutamyl-tRNA(Glu) + AMP + diphosphate</text>
        <dbReference type="Rhea" id="RHEA:23540"/>
        <dbReference type="Rhea" id="RHEA-COMP:9663"/>
        <dbReference type="Rhea" id="RHEA-COMP:9680"/>
        <dbReference type="ChEBI" id="CHEBI:29985"/>
        <dbReference type="ChEBI" id="CHEBI:30616"/>
        <dbReference type="ChEBI" id="CHEBI:33019"/>
        <dbReference type="ChEBI" id="CHEBI:78442"/>
        <dbReference type="ChEBI" id="CHEBI:78520"/>
        <dbReference type="ChEBI" id="CHEBI:456215"/>
        <dbReference type="EC" id="6.1.1.17"/>
    </reaction>
</comment>
<comment type="subunit">
    <text evidence="1">Monomer.</text>
</comment>
<comment type="subcellular location">
    <subcellularLocation>
        <location evidence="1">Cytoplasm</location>
    </subcellularLocation>
</comment>
<comment type="similarity">
    <text evidence="1">Belongs to the class-I aminoacyl-tRNA synthetase family. Glutamate--tRNA ligase type 1 subfamily.</text>
</comment>